<gene>
    <name type="ordered locus">SPP_0507</name>
</gene>
<keyword id="KW-1003">Cell membrane</keyword>
<keyword id="KW-0472">Membrane</keyword>
<keyword id="KW-0812">Transmembrane</keyword>
<keyword id="KW-1133">Transmembrane helix</keyword>
<reference key="1">
    <citation type="journal article" date="2010" name="Genome Biol.">
        <title>Structure and dynamics of the pan-genome of Streptococcus pneumoniae and closely related species.</title>
        <authorList>
            <person name="Donati C."/>
            <person name="Hiller N.L."/>
            <person name="Tettelin H."/>
            <person name="Muzzi A."/>
            <person name="Croucher N.J."/>
            <person name="Angiuoli S.V."/>
            <person name="Oggioni M."/>
            <person name="Dunning Hotopp J.C."/>
            <person name="Hu F.Z."/>
            <person name="Riley D.R."/>
            <person name="Covacci A."/>
            <person name="Mitchell T.J."/>
            <person name="Bentley S.D."/>
            <person name="Kilian M."/>
            <person name="Ehrlich G.D."/>
            <person name="Rappuoli R."/>
            <person name="Moxon E.R."/>
            <person name="Masignani V."/>
        </authorList>
    </citation>
    <scope>NUCLEOTIDE SEQUENCE [LARGE SCALE GENOMIC DNA]</scope>
    <source>
        <strain>P1031</strain>
    </source>
</reference>
<proteinExistence type="inferred from homology"/>
<name>Y507_STRZP</name>
<protein>
    <recommendedName>
        <fullName evidence="1">UPF0397 protein SPP_0507</fullName>
    </recommendedName>
</protein>
<evidence type="ECO:0000255" key="1">
    <source>
        <dbReference type="HAMAP-Rule" id="MF_01572"/>
    </source>
</evidence>
<comment type="subcellular location">
    <subcellularLocation>
        <location evidence="1">Cell membrane</location>
        <topology evidence="1">Multi-pass membrane protein</topology>
    </subcellularLocation>
</comment>
<comment type="similarity">
    <text evidence="1">Belongs to the UPF0397 family.</text>
</comment>
<accession>C1CIX7</accession>
<feature type="chain" id="PRO_1000185573" description="UPF0397 protein SPP_0507">
    <location>
        <begin position="1"/>
        <end position="182"/>
    </location>
</feature>
<feature type="transmembrane region" description="Helical" evidence="1">
    <location>
        <begin position="10"/>
        <end position="30"/>
    </location>
</feature>
<feature type="transmembrane region" description="Helical" evidence="1">
    <location>
        <begin position="46"/>
        <end position="66"/>
    </location>
</feature>
<feature type="transmembrane region" description="Helical" evidence="1">
    <location>
        <begin position="73"/>
        <end position="93"/>
    </location>
</feature>
<feature type="transmembrane region" description="Helical" evidence="1">
    <location>
        <begin position="109"/>
        <end position="129"/>
    </location>
</feature>
<feature type="transmembrane region" description="Helical" evidence="1">
    <location>
        <begin position="148"/>
        <end position="168"/>
    </location>
</feature>
<organism>
    <name type="scientific">Streptococcus pneumoniae (strain P1031)</name>
    <dbReference type="NCBI Taxonomy" id="488223"/>
    <lineage>
        <taxon>Bacteria</taxon>
        <taxon>Bacillati</taxon>
        <taxon>Bacillota</taxon>
        <taxon>Bacilli</taxon>
        <taxon>Lactobacillales</taxon>
        <taxon>Streptococcaceae</taxon>
        <taxon>Streptococcus</taxon>
    </lineage>
</organism>
<sequence length="182" mass="19315">MEIKFTIKQVVAVGIGAALFVVIGMINIPTPVPNTSIQLQYAVQALLSIIFGPIIGLLVGLIGHAIKDSLAGYGLWWTWIIASGLFGLVVGLFRKYVRVINGVFDWKDILIFNLIQLLANALVWGVLAPLGDVVIYQEAAEKVFAQGIVAGIANGVSVAIAGTLLLLAYAGTQTRAGSLKKD</sequence>
<dbReference type="EMBL" id="CP000920">
    <property type="protein sequence ID" value="ACO21407.1"/>
    <property type="molecule type" value="Genomic_DNA"/>
</dbReference>
<dbReference type="RefSeq" id="WP_000403162.1">
    <property type="nucleotide sequence ID" value="NC_012467.1"/>
</dbReference>
<dbReference type="SMR" id="C1CIX7"/>
<dbReference type="KEGG" id="spp:SPP_0507"/>
<dbReference type="HOGENOM" id="CLU_120023_0_0_9"/>
<dbReference type="GO" id="GO:0005886">
    <property type="term" value="C:plasma membrane"/>
    <property type="evidence" value="ECO:0007669"/>
    <property type="project" value="UniProtKB-SubCell"/>
</dbReference>
<dbReference type="Gene3D" id="1.10.1760.20">
    <property type="match status" value="1"/>
</dbReference>
<dbReference type="HAMAP" id="MF_01572">
    <property type="entry name" value="UPF0397"/>
    <property type="match status" value="1"/>
</dbReference>
<dbReference type="InterPro" id="IPR009825">
    <property type="entry name" value="ECF_substrate-spec-like"/>
</dbReference>
<dbReference type="InterPro" id="IPR022914">
    <property type="entry name" value="UPF0397"/>
</dbReference>
<dbReference type="NCBIfam" id="NF010182">
    <property type="entry name" value="PRK13661.1"/>
    <property type="match status" value="1"/>
</dbReference>
<dbReference type="PANTHER" id="PTHR37815">
    <property type="entry name" value="UPF0397 PROTEIN BC_2624-RELATED"/>
    <property type="match status" value="1"/>
</dbReference>
<dbReference type="PANTHER" id="PTHR37815:SF3">
    <property type="entry name" value="UPF0397 PROTEIN SPR0429"/>
    <property type="match status" value="1"/>
</dbReference>
<dbReference type="Pfam" id="PF07155">
    <property type="entry name" value="ECF-ribofla_trS"/>
    <property type="match status" value="1"/>
</dbReference>